<proteinExistence type="evidence at transcript level"/>
<evidence type="ECO:0000250" key="1"/>
<evidence type="ECO:0000255" key="2"/>
<evidence type="ECO:0000255" key="3">
    <source>
        <dbReference type="PROSITE-ProRule" id="PRU00352"/>
    </source>
</evidence>
<evidence type="ECO:0000256" key="4">
    <source>
        <dbReference type="SAM" id="MobiDB-lite"/>
    </source>
</evidence>
<evidence type="ECO:0000305" key="5"/>
<feature type="signal peptide" evidence="2">
    <location>
        <begin position="1"/>
        <end position="21"/>
    </location>
</feature>
<feature type="chain" id="PRO_0000345144" description="Semaphorin-3C">
    <location>
        <begin position="22"/>
        <end position="751"/>
    </location>
</feature>
<feature type="domain" description="Sema" evidence="3">
    <location>
        <begin position="28"/>
        <end position="511"/>
    </location>
</feature>
<feature type="domain" description="Ig-like C2-type">
    <location>
        <begin position="571"/>
        <end position="655"/>
    </location>
</feature>
<feature type="region of interest" description="Disordered" evidence="4">
    <location>
        <begin position="712"/>
        <end position="751"/>
    </location>
</feature>
<feature type="compositionally biased region" description="Basic and acidic residues" evidence="4">
    <location>
        <begin position="712"/>
        <end position="731"/>
    </location>
</feature>
<feature type="glycosylation site" description="N-linked (GlcNAc...) asparagine" evidence="2">
    <location>
        <position position="81"/>
    </location>
</feature>
<feature type="glycosylation site" description="N-linked (GlcNAc...) asparagine" evidence="2">
    <location>
        <position position="123"/>
    </location>
</feature>
<feature type="glycosylation site" description="N-linked (GlcNAc...) asparagine" evidence="2">
    <location>
        <position position="268"/>
    </location>
</feature>
<feature type="glycosylation site" description="N-linked (GlcNAc...) asparagine" evidence="2">
    <location>
        <position position="465"/>
    </location>
</feature>
<feature type="glycosylation site" description="N-linked (GlcNAc...) asparagine" evidence="2">
    <location>
        <position position="585"/>
    </location>
</feature>
<feature type="glycosylation site" description="N-linked (GlcNAc...) asparagine" evidence="2">
    <location>
        <position position="586"/>
    </location>
</feature>
<feature type="disulfide bond" evidence="1">
    <location>
        <begin position="101"/>
        <end position="112"/>
    </location>
</feature>
<feature type="disulfide bond" evidence="1">
    <location>
        <begin position="130"/>
        <end position="139"/>
    </location>
</feature>
<feature type="disulfide bond" evidence="1">
    <location>
        <begin position="266"/>
        <end position="378"/>
    </location>
</feature>
<feature type="disulfide bond" evidence="1">
    <location>
        <begin position="290"/>
        <end position="338"/>
    </location>
</feature>
<feature type="disulfide bond" evidence="1">
    <location>
        <begin position="514"/>
        <end position="532"/>
    </location>
</feature>
<feature type="disulfide bond" evidence="1">
    <location>
        <begin position="592"/>
        <end position="643"/>
    </location>
</feature>
<comment type="function">
    <text evidence="1">Binds to plexin family members and plays an important role in the regulation of developmental processes. Required for normal cardiovascular development during embryogenesis. Functions as attractant for growing axons, and thereby plays an important role in axon growth and axon guidance (By similarity).</text>
</comment>
<comment type="subunit">
    <text evidence="1">Interacts with PLXND1.</text>
</comment>
<comment type="subcellular location">
    <subcellularLocation>
        <location evidence="1">Secreted</location>
    </subcellularLocation>
</comment>
<comment type="similarity">
    <text evidence="5">Belongs to the semaphorin family.</text>
</comment>
<reference key="1">
    <citation type="submission" date="2007-07" db="EMBL/GenBank/DDBJ databases">
        <authorList>
            <consortium name="NIH - Mammalian Gene Collection (MGC) project"/>
        </authorList>
    </citation>
    <scope>NUCLEOTIDE SEQUENCE [LARGE SCALE MRNA]</scope>
    <source>
        <strain>Hereford</strain>
        <tissue>Fetal muscle</tissue>
    </source>
</reference>
<dbReference type="EMBL" id="BC151369">
    <property type="protein sequence ID" value="AAI51370.1"/>
    <property type="molecule type" value="mRNA"/>
</dbReference>
<dbReference type="RefSeq" id="NP_001094552.1">
    <property type="nucleotide sequence ID" value="NM_001101082.1"/>
</dbReference>
<dbReference type="RefSeq" id="XP_024846395.1">
    <property type="nucleotide sequence ID" value="XM_024990627.2"/>
</dbReference>
<dbReference type="RefSeq" id="XP_059741517.1">
    <property type="nucleotide sequence ID" value="XM_059885534.1"/>
</dbReference>
<dbReference type="SMR" id="A7MB70"/>
<dbReference type="FunCoup" id="A7MB70">
    <property type="interactions" value="196"/>
</dbReference>
<dbReference type="STRING" id="9913.ENSBTAP00000008076"/>
<dbReference type="GlyCosmos" id="A7MB70">
    <property type="glycosylation" value="6 sites, No reported glycans"/>
</dbReference>
<dbReference type="GlyGen" id="A7MB70">
    <property type="glycosylation" value="6 sites"/>
</dbReference>
<dbReference type="PaxDb" id="9913-ENSBTAP00000008076"/>
<dbReference type="Ensembl" id="ENSBTAT00000008076.6">
    <property type="protein sequence ID" value="ENSBTAP00000008076.4"/>
    <property type="gene ID" value="ENSBTAG00000006138.6"/>
</dbReference>
<dbReference type="GeneID" id="512660"/>
<dbReference type="KEGG" id="bta:512660"/>
<dbReference type="CTD" id="10512"/>
<dbReference type="VEuPathDB" id="HostDB:ENSBTAG00000006138"/>
<dbReference type="VGNC" id="VGNC:34428">
    <property type="gene designation" value="SEMA3C"/>
</dbReference>
<dbReference type="eggNOG" id="KOG3611">
    <property type="taxonomic scope" value="Eukaryota"/>
</dbReference>
<dbReference type="GeneTree" id="ENSGT00940000159379"/>
<dbReference type="HOGENOM" id="CLU_009051_5_0_1"/>
<dbReference type="InParanoid" id="A7MB70"/>
<dbReference type="OMA" id="AMYIDFM"/>
<dbReference type="OrthoDB" id="9988752at2759"/>
<dbReference type="TreeFam" id="TF352628"/>
<dbReference type="Proteomes" id="UP000009136">
    <property type="component" value="Chromosome 4"/>
</dbReference>
<dbReference type="Bgee" id="ENSBTAG00000006138">
    <property type="expression patterns" value="Expressed in omental fat pad and 103 other cell types or tissues"/>
</dbReference>
<dbReference type="GO" id="GO:0005615">
    <property type="term" value="C:extracellular space"/>
    <property type="evidence" value="ECO:0000318"/>
    <property type="project" value="GO_Central"/>
</dbReference>
<dbReference type="GO" id="GO:0005886">
    <property type="term" value="C:plasma membrane"/>
    <property type="evidence" value="ECO:0000318"/>
    <property type="project" value="GO_Central"/>
</dbReference>
<dbReference type="GO" id="GO:0045499">
    <property type="term" value="F:chemorepellent activity"/>
    <property type="evidence" value="ECO:0000318"/>
    <property type="project" value="GO_Central"/>
</dbReference>
<dbReference type="GO" id="GO:0038191">
    <property type="term" value="F:neuropilin binding"/>
    <property type="evidence" value="ECO:0000318"/>
    <property type="project" value="GO_Central"/>
</dbReference>
<dbReference type="GO" id="GO:0030215">
    <property type="term" value="F:semaphorin receptor binding"/>
    <property type="evidence" value="ECO:0000318"/>
    <property type="project" value="GO_Central"/>
</dbReference>
<dbReference type="GO" id="GO:0007411">
    <property type="term" value="P:axon guidance"/>
    <property type="evidence" value="ECO:0000250"/>
    <property type="project" value="UniProtKB"/>
</dbReference>
<dbReference type="GO" id="GO:0001974">
    <property type="term" value="P:blood vessel remodeling"/>
    <property type="evidence" value="ECO:0007669"/>
    <property type="project" value="Ensembl"/>
</dbReference>
<dbReference type="GO" id="GO:0140074">
    <property type="term" value="P:cardiac endothelial to mesenchymal transition"/>
    <property type="evidence" value="ECO:0007669"/>
    <property type="project" value="Ensembl"/>
</dbReference>
<dbReference type="GO" id="GO:0003215">
    <property type="term" value="P:cardiac right ventricle morphogenesis"/>
    <property type="evidence" value="ECO:0007669"/>
    <property type="project" value="Ensembl"/>
</dbReference>
<dbReference type="GO" id="GO:0060666">
    <property type="term" value="P:dichotomous subdivision of terminal units involved in salivary gland branching"/>
    <property type="evidence" value="ECO:0007669"/>
    <property type="project" value="Ensembl"/>
</dbReference>
<dbReference type="GO" id="GO:0060174">
    <property type="term" value="P:limb bud formation"/>
    <property type="evidence" value="ECO:0007669"/>
    <property type="project" value="Ensembl"/>
</dbReference>
<dbReference type="GO" id="GO:0050919">
    <property type="term" value="P:negative chemotaxis"/>
    <property type="evidence" value="ECO:0000318"/>
    <property type="project" value="GO_Central"/>
</dbReference>
<dbReference type="GO" id="GO:0001755">
    <property type="term" value="P:neural crest cell migration"/>
    <property type="evidence" value="ECO:0000318"/>
    <property type="project" value="GO_Central"/>
</dbReference>
<dbReference type="GO" id="GO:0021915">
    <property type="term" value="P:neural tube development"/>
    <property type="evidence" value="ECO:0007669"/>
    <property type="project" value="Ensembl"/>
</dbReference>
<dbReference type="GO" id="GO:0003148">
    <property type="term" value="P:outflow tract septum morphogenesis"/>
    <property type="evidence" value="ECO:0007669"/>
    <property type="project" value="Ensembl"/>
</dbReference>
<dbReference type="GO" id="GO:1905312">
    <property type="term" value="P:positive regulation of cardiac neural crest cell migration involved in outflow tract morphogenesis"/>
    <property type="evidence" value="ECO:0007669"/>
    <property type="project" value="Ensembl"/>
</dbReference>
<dbReference type="GO" id="GO:0030335">
    <property type="term" value="P:positive regulation of cell migration"/>
    <property type="evidence" value="ECO:0000318"/>
    <property type="project" value="GO_Central"/>
</dbReference>
<dbReference type="GO" id="GO:0009791">
    <property type="term" value="P:post-embryonic development"/>
    <property type="evidence" value="ECO:0007669"/>
    <property type="project" value="Ensembl"/>
</dbReference>
<dbReference type="GO" id="GO:0003350">
    <property type="term" value="P:pulmonary myocardium development"/>
    <property type="evidence" value="ECO:0007669"/>
    <property type="project" value="Ensembl"/>
</dbReference>
<dbReference type="GO" id="GO:0071526">
    <property type="term" value="P:semaphorin-plexin signaling pathway"/>
    <property type="evidence" value="ECO:0000318"/>
    <property type="project" value="GO_Central"/>
</dbReference>
<dbReference type="GO" id="GO:0001756">
    <property type="term" value="P:somitogenesis"/>
    <property type="evidence" value="ECO:0007669"/>
    <property type="project" value="Ensembl"/>
</dbReference>
<dbReference type="CDD" id="cd05871">
    <property type="entry name" value="Ig_Sema3"/>
    <property type="match status" value="1"/>
</dbReference>
<dbReference type="CDD" id="cd11251">
    <property type="entry name" value="Sema_3C"/>
    <property type="match status" value="1"/>
</dbReference>
<dbReference type="FunFam" id="2.130.10.10:FF:000123">
    <property type="entry name" value="Semaphorin 3C"/>
    <property type="match status" value="1"/>
</dbReference>
<dbReference type="FunFam" id="2.60.40.10:FF:000030">
    <property type="entry name" value="Semaphorin 3F like"/>
    <property type="match status" value="1"/>
</dbReference>
<dbReference type="FunFam" id="3.30.1680.10:FF:000001">
    <property type="entry name" value="Semaphorin 3F like"/>
    <property type="match status" value="1"/>
</dbReference>
<dbReference type="Gene3D" id="2.60.40.10">
    <property type="entry name" value="Immunoglobulins"/>
    <property type="match status" value="1"/>
</dbReference>
<dbReference type="Gene3D" id="3.30.1680.10">
    <property type="entry name" value="ligand-binding face of the semaphorins, domain 2"/>
    <property type="match status" value="1"/>
</dbReference>
<dbReference type="Gene3D" id="2.130.10.10">
    <property type="entry name" value="YVTN repeat-like/Quinoprotein amine dehydrogenase"/>
    <property type="match status" value="1"/>
</dbReference>
<dbReference type="InterPro" id="IPR007110">
    <property type="entry name" value="Ig-like_dom"/>
</dbReference>
<dbReference type="InterPro" id="IPR036179">
    <property type="entry name" value="Ig-like_dom_sf"/>
</dbReference>
<dbReference type="InterPro" id="IPR013783">
    <property type="entry name" value="Ig-like_fold"/>
</dbReference>
<dbReference type="InterPro" id="IPR013098">
    <property type="entry name" value="Ig_I-set"/>
</dbReference>
<dbReference type="InterPro" id="IPR003599">
    <property type="entry name" value="Ig_sub"/>
</dbReference>
<dbReference type="InterPro" id="IPR016201">
    <property type="entry name" value="PSI"/>
</dbReference>
<dbReference type="InterPro" id="IPR001627">
    <property type="entry name" value="Semap_dom"/>
</dbReference>
<dbReference type="InterPro" id="IPR036352">
    <property type="entry name" value="Semap_dom_sf"/>
</dbReference>
<dbReference type="InterPro" id="IPR027231">
    <property type="entry name" value="Semaphorin"/>
</dbReference>
<dbReference type="InterPro" id="IPR015943">
    <property type="entry name" value="WD40/YVTN_repeat-like_dom_sf"/>
</dbReference>
<dbReference type="PANTHER" id="PTHR11036">
    <property type="entry name" value="SEMAPHORIN"/>
    <property type="match status" value="1"/>
</dbReference>
<dbReference type="PANTHER" id="PTHR11036:SF25">
    <property type="entry name" value="SEMAPHORIN-3C"/>
    <property type="match status" value="1"/>
</dbReference>
<dbReference type="Pfam" id="PF07679">
    <property type="entry name" value="I-set"/>
    <property type="match status" value="1"/>
</dbReference>
<dbReference type="Pfam" id="PF01403">
    <property type="entry name" value="Sema"/>
    <property type="match status" value="1"/>
</dbReference>
<dbReference type="SMART" id="SM00409">
    <property type="entry name" value="IG"/>
    <property type="match status" value="1"/>
</dbReference>
<dbReference type="SMART" id="SM00423">
    <property type="entry name" value="PSI"/>
    <property type="match status" value="1"/>
</dbReference>
<dbReference type="SMART" id="SM00630">
    <property type="entry name" value="Sema"/>
    <property type="match status" value="1"/>
</dbReference>
<dbReference type="SUPFAM" id="SSF48726">
    <property type="entry name" value="Immunoglobulin"/>
    <property type="match status" value="1"/>
</dbReference>
<dbReference type="SUPFAM" id="SSF103575">
    <property type="entry name" value="Plexin repeat"/>
    <property type="match status" value="1"/>
</dbReference>
<dbReference type="SUPFAM" id="SSF101912">
    <property type="entry name" value="Sema domain"/>
    <property type="match status" value="1"/>
</dbReference>
<dbReference type="PROSITE" id="PS50835">
    <property type="entry name" value="IG_LIKE"/>
    <property type="match status" value="1"/>
</dbReference>
<dbReference type="PROSITE" id="PS51004">
    <property type="entry name" value="SEMA"/>
    <property type="match status" value="1"/>
</dbReference>
<protein>
    <recommendedName>
        <fullName>Semaphorin-3C</fullName>
    </recommendedName>
</protein>
<gene>
    <name type="primary">SEMA3C</name>
</gene>
<organism>
    <name type="scientific">Bos taurus</name>
    <name type="common">Bovine</name>
    <dbReference type="NCBI Taxonomy" id="9913"/>
    <lineage>
        <taxon>Eukaryota</taxon>
        <taxon>Metazoa</taxon>
        <taxon>Chordata</taxon>
        <taxon>Craniata</taxon>
        <taxon>Vertebrata</taxon>
        <taxon>Euteleostomi</taxon>
        <taxon>Mammalia</taxon>
        <taxon>Eutheria</taxon>
        <taxon>Laurasiatheria</taxon>
        <taxon>Artiodactyla</taxon>
        <taxon>Ruminantia</taxon>
        <taxon>Pecora</taxon>
        <taxon>Bovidae</taxon>
        <taxon>Bovinae</taxon>
        <taxon>Bos</taxon>
    </lineage>
</organism>
<name>SEM3C_BOVIN</name>
<accession>A7MB70</accession>
<sequence>MAFQAVCILVGVFVCSTYVKGSPQPQARVYLTFDELRETKTSEYFSLSQYPLDYRILLMDEDQDRMYVGSKDHILSLNINNISQEPLSVFWPASAIKVEECKMAGKDPTHGCGNFVRVIQAFNRTHLYVCGSGAFSPVCAYLNRGRRSEDQVFMIDSKCESGKGRCSFNPNVNTVSVMINEELFSGMYIDFMGTDAAIFRSLTKRNAVRTDQHNSKWLSEPMFVDAHVIPDGTDPNDAKVYFFFKEKLTDNSRSTKQIHSMIARICPNDTGGLRSLVNKWTTFLKARLVCSVTDEDGPETHFDELEDVFLLEMDNPRTTLVYGIFTTSSSVFKGSAVCVYHFSDIQTVFNGPFAHKEGPNHQLISYQGRIPYPRPGTCPGGAFTPNMRTTKEFPDDVVTFIRNHPLMYNSIYPVHRRPLIVRIGTDYKYTKIAVDRVNAADGTYNVLFLGTDRGTVQKVVVLPTNSSARSELILEELEVFKNHAPITTMKISSKKQQLYVSSNEGLAQVSLHRCHIYGSACADCCLARDPYCAWDGHSCSRFYPTGKRRSRRQDVRHGNPLTQCRGFNLKAYRNAAEIVQYGVKNNTTFLECAPKSPQASIKWLLQKDKDRRKEVKLNERIIATSQGLLIRSVQDSDQGLYHCIATENSFKQTIAKINFKVLDSEMVAVVTDKWSPWTWASSVRALPFHPKDIMGAFSHSEMQMINQYCKDTRQQHQQGEESQKMRGDYGKLKALINSRKSRNRRNQLPES</sequence>
<keyword id="KW-0217">Developmental protein</keyword>
<keyword id="KW-0221">Differentiation</keyword>
<keyword id="KW-1015">Disulfide bond</keyword>
<keyword id="KW-0325">Glycoprotein</keyword>
<keyword id="KW-0393">Immunoglobulin domain</keyword>
<keyword id="KW-0524">Neurogenesis</keyword>
<keyword id="KW-1185">Reference proteome</keyword>
<keyword id="KW-0964">Secreted</keyword>
<keyword id="KW-0732">Signal</keyword>